<proteinExistence type="inferred from homology"/>
<dbReference type="EC" id="3.6.4.-" evidence="1"/>
<dbReference type="EMBL" id="CP000538">
    <property type="protein sequence ID" value="EAQ72911.1"/>
    <property type="molecule type" value="Genomic_DNA"/>
</dbReference>
<dbReference type="RefSeq" id="WP_002856258.1">
    <property type="nucleotide sequence ID" value="NC_008787.1"/>
</dbReference>
<dbReference type="SMR" id="A1W0X9"/>
<dbReference type="KEGG" id="cjj:CJJ81176_1364"/>
<dbReference type="eggNOG" id="COG2255">
    <property type="taxonomic scope" value="Bacteria"/>
</dbReference>
<dbReference type="HOGENOM" id="CLU_055599_1_0_7"/>
<dbReference type="Proteomes" id="UP000000646">
    <property type="component" value="Chromosome"/>
</dbReference>
<dbReference type="GO" id="GO:0005737">
    <property type="term" value="C:cytoplasm"/>
    <property type="evidence" value="ECO:0007669"/>
    <property type="project" value="UniProtKB-SubCell"/>
</dbReference>
<dbReference type="GO" id="GO:0048476">
    <property type="term" value="C:Holliday junction resolvase complex"/>
    <property type="evidence" value="ECO:0007669"/>
    <property type="project" value="UniProtKB-UniRule"/>
</dbReference>
<dbReference type="GO" id="GO:0005524">
    <property type="term" value="F:ATP binding"/>
    <property type="evidence" value="ECO:0007669"/>
    <property type="project" value="UniProtKB-UniRule"/>
</dbReference>
<dbReference type="GO" id="GO:0016887">
    <property type="term" value="F:ATP hydrolysis activity"/>
    <property type="evidence" value="ECO:0007669"/>
    <property type="project" value="InterPro"/>
</dbReference>
<dbReference type="GO" id="GO:0000400">
    <property type="term" value="F:four-way junction DNA binding"/>
    <property type="evidence" value="ECO:0007669"/>
    <property type="project" value="UniProtKB-UniRule"/>
</dbReference>
<dbReference type="GO" id="GO:0009378">
    <property type="term" value="F:four-way junction helicase activity"/>
    <property type="evidence" value="ECO:0007669"/>
    <property type="project" value="InterPro"/>
</dbReference>
<dbReference type="GO" id="GO:0006310">
    <property type="term" value="P:DNA recombination"/>
    <property type="evidence" value="ECO:0007669"/>
    <property type="project" value="UniProtKB-UniRule"/>
</dbReference>
<dbReference type="GO" id="GO:0006281">
    <property type="term" value="P:DNA repair"/>
    <property type="evidence" value="ECO:0007669"/>
    <property type="project" value="UniProtKB-UniRule"/>
</dbReference>
<dbReference type="CDD" id="cd00009">
    <property type="entry name" value="AAA"/>
    <property type="match status" value="1"/>
</dbReference>
<dbReference type="Gene3D" id="1.10.8.60">
    <property type="match status" value="1"/>
</dbReference>
<dbReference type="Gene3D" id="3.40.50.300">
    <property type="entry name" value="P-loop containing nucleotide triphosphate hydrolases"/>
    <property type="match status" value="1"/>
</dbReference>
<dbReference type="Gene3D" id="1.10.10.10">
    <property type="entry name" value="Winged helix-like DNA-binding domain superfamily/Winged helix DNA-binding domain"/>
    <property type="match status" value="1"/>
</dbReference>
<dbReference type="HAMAP" id="MF_00016">
    <property type="entry name" value="DNA_HJ_migration_RuvB"/>
    <property type="match status" value="1"/>
</dbReference>
<dbReference type="InterPro" id="IPR003593">
    <property type="entry name" value="AAA+_ATPase"/>
</dbReference>
<dbReference type="InterPro" id="IPR041445">
    <property type="entry name" value="AAA_lid_4"/>
</dbReference>
<dbReference type="InterPro" id="IPR004605">
    <property type="entry name" value="DNA_helicase_Holl-junc_RuvB"/>
</dbReference>
<dbReference type="InterPro" id="IPR027417">
    <property type="entry name" value="P-loop_NTPase"/>
</dbReference>
<dbReference type="InterPro" id="IPR008824">
    <property type="entry name" value="RuvB-like_N"/>
</dbReference>
<dbReference type="InterPro" id="IPR008823">
    <property type="entry name" value="RuvB_C"/>
</dbReference>
<dbReference type="InterPro" id="IPR036388">
    <property type="entry name" value="WH-like_DNA-bd_sf"/>
</dbReference>
<dbReference type="InterPro" id="IPR036390">
    <property type="entry name" value="WH_DNA-bd_sf"/>
</dbReference>
<dbReference type="NCBIfam" id="NF000868">
    <property type="entry name" value="PRK00080.1"/>
    <property type="match status" value="1"/>
</dbReference>
<dbReference type="NCBIfam" id="TIGR00635">
    <property type="entry name" value="ruvB"/>
    <property type="match status" value="1"/>
</dbReference>
<dbReference type="PANTHER" id="PTHR42848">
    <property type="match status" value="1"/>
</dbReference>
<dbReference type="PANTHER" id="PTHR42848:SF1">
    <property type="entry name" value="HOLLIDAY JUNCTION BRANCH MIGRATION COMPLEX SUBUNIT RUVB"/>
    <property type="match status" value="1"/>
</dbReference>
<dbReference type="Pfam" id="PF17864">
    <property type="entry name" value="AAA_lid_4"/>
    <property type="match status" value="1"/>
</dbReference>
<dbReference type="Pfam" id="PF05491">
    <property type="entry name" value="RuvB_C"/>
    <property type="match status" value="1"/>
</dbReference>
<dbReference type="Pfam" id="PF05496">
    <property type="entry name" value="RuvB_N"/>
    <property type="match status" value="1"/>
</dbReference>
<dbReference type="SMART" id="SM00382">
    <property type="entry name" value="AAA"/>
    <property type="match status" value="1"/>
</dbReference>
<dbReference type="SUPFAM" id="SSF52540">
    <property type="entry name" value="P-loop containing nucleoside triphosphate hydrolases"/>
    <property type="match status" value="1"/>
</dbReference>
<dbReference type="SUPFAM" id="SSF46785">
    <property type="entry name" value="Winged helix' DNA-binding domain"/>
    <property type="match status" value="1"/>
</dbReference>
<feature type="chain" id="PRO_1000001384" description="Holliday junction branch migration complex subunit RuvB">
    <location>
        <begin position="1"/>
        <end position="335"/>
    </location>
</feature>
<feature type="region of interest" description="Large ATPase domain (RuvB-L)" evidence="1">
    <location>
        <begin position="1"/>
        <end position="181"/>
    </location>
</feature>
<feature type="region of interest" description="Small ATPAse domain (RuvB-S)" evidence="1">
    <location>
        <begin position="182"/>
        <end position="252"/>
    </location>
</feature>
<feature type="region of interest" description="Head domain (RuvB-H)" evidence="1">
    <location>
        <begin position="255"/>
        <end position="335"/>
    </location>
</feature>
<feature type="binding site" evidence="1">
    <location>
        <position position="20"/>
    </location>
    <ligand>
        <name>ATP</name>
        <dbReference type="ChEBI" id="CHEBI:30616"/>
    </ligand>
</feature>
<feature type="binding site" evidence="1">
    <location>
        <position position="21"/>
    </location>
    <ligand>
        <name>ATP</name>
        <dbReference type="ChEBI" id="CHEBI:30616"/>
    </ligand>
</feature>
<feature type="binding site" evidence="1">
    <location>
        <position position="62"/>
    </location>
    <ligand>
        <name>ATP</name>
        <dbReference type="ChEBI" id="CHEBI:30616"/>
    </ligand>
</feature>
<feature type="binding site" evidence="1">
    <location>
        <position position="65"/>
    </location>
    <ligand>
        <name>ATP</name>
        <dbReference type="ChEBI" id="CHEBI:30616"/>
    </ligand>
</feature>
<feature type="binding site" evidence="1">
    <location>
        <position position="66"/>
    </location>
    <ligand>
        <name>ATP</name>
        <dbReference type="ChEBI" id="CHEBI:30616"/>
    </ligand>
</feature>
<feature type="binding site" evidence="1">
    <location>
        <position position="66"/>
    </location>
    <ligand>
        <name>Mg(2+)</name>
        <dbReference type="ChEBI" id="CHEBI:18420"/>
    </ligand>
</feature>
<feature type="binding site" evidence="1">
    <location>
        <position position="67"/>
    </location>
    <ligand>
        <name>ATP</name>
        <dbReference type="ChEBI" id="CHEBI:30616"/>
    </ligand>
</feature>
<feature type="binding site" evidence="1">
    <location>
        <begin position="128"/>
        <end position="130"/>
    </location>
    <ligand>
        <name>ATP</name>
        <dbReference type="ChEBI" id="CHEBI:30616"/>
    </ligand>
</feature>
<feature type="binding site" evidence="1">
    <location>
        <position position="171"/>
    </location>
    <ligand>
        <name>ATP</name>
        <dbReference type="ChEBI" id="CHEBI:30616"/>
    </ligand>
</feature>
<feature type="binding site" evidence="1">
    <location>
        <position position="181"/>
    </location>
    <ligand>
        <name>ATP</name>
        <dbReference type="ChEBI" id="CHEBI:30616"/>
    </ligand>
</feature>
<feature type="binding site" evidence="1">
    <location>
        <position position="218"/>
    </location>
    <ligand>
        <name>ATP</name>
        <dbReference type="ChEBI" id="CHEBI:30616"/>
    </ligand>
</feature>
<feature type="binding site" evidence="1">
    <location>
        <position position="309"/>
    </location>
    <ligand>
        <name>DNA</name>
        <dbReference type="ChEBI" id="CHEBI:16991"/>
    </ligand>
</feature>
<feature type="binding site" evidence="1">
    <location>
        <position position="314"/>
    </location>
    <ligand>
        <name>DNA</name>
        <dbReference type="ChEBI" id="CHEBI:16991"/>
    </ligand>
</feature>
<evidence type="ECO:0000255" key="1">
    <source>
        <dbReference type="HAMAP-Rule" id="MF_00016"/>
    </source>
</evidence>
<protein>
    <recommendedName>
        <fullName evidence="1">Holliday junction branch migration complex subunit RuvB</fullName>
        <ecNumber evidence="1">3.6.4.-</ecNumber>
    </recommendedName>
</protein>
<gene>
    <name evidence="1" type="primary">ruvB</name>
    <name type="ordered locus">CJJ81176_1364</name>
</gene>
<accession>A1W0X9</accession>
<keyword id="KW-0067">ATP-binding</keyword>
<keyword id="KW-0963">Cytoplasm</keyword>
<keyword id="KW-0227">DNA damage</keyword>
<keyword id="KW-0233">DNA recombination</keyword>
<keyword id="KW-0234">DNA repair</keyword>
<keyword id="KW-0238">DNA-binding</keyword>
<keyword id="KW-0378">Hydrolase</keyword>
<keyword id="KW-0547">Nucleotide-binding</keyword>
<sequence>MDRIVEIEKYSFDETYETSLRPSNFDGYIGQESIKKNLNVFIAAAKKRNECLDHILFSGPAGLGKTTLANIISYEMSANIKTTAAPMIEKSGDLAAILTNLSEGDILFIDEIHRLSPAIEEVLYPAMEDYRLDIIIGSGPAAQTIKIDLPKFTLIGATTRAGMLSNPLRDRFGMQFRLEFYKDSELALILQKAALKLNKTCEEKAALEIAKRSRSTPRIALRLLKRVRDFADVNDEEIITEKRANEALNSLGVNELGFDAMDLRYLELLTAAKQKPIGLASIAAALSEDENTIEDVIEPYLLANGYIERTAKGRIASAKSYSALKLNYEKTLFEE</sequence>
<comment type="function">
    <text evidence="1">The RuvA-RuvB-RuvC complex processes Holliday junction (HJ) DNA during genetic recombination and DNA repair, while the RuvA-RuvB complex plays an important role in the rescue of blocked DNA replication forks via replication fork reversal (RFR). RuvA specifically binds to HJ cruciform DNA, conferring on it an open structure. The RuvB hexamer acts as an ATP-dependent pump, pulling dsDNA into and through the RuvAB complex. RuvB forms 2 homohexamers on either side of HJ DNA bound by 1 or 2 RuvA tetramers; 4 subunits per hexamer contact DNA at a time. Coordinated motions by a converter formed by DNA-disengaged RuvB subunits stimulates ATP hydrolysis and nucleotide exchange. Immobilization of the converter enables RuvB to convert the ATP-contained energy into a lever motion, pulling 2 nucleotides of DNA out of the RuvA tetramer per ATP hydrolyzed, thus driving DNA branch migration. The RuvB motors rotate together with the DNA substrate, which together with the progressing nucleotide cycle form the mechanistic basis for DNA recombination by continuous HJ branch migration. Branch migration allows RuvC to scan DNA until it finds its consensus sequence, where it cleaves and resolves cruciform DNA.</text>
</comment>
<comment type="catalytic activity">
    <reaction evidence="1">
        <text>ATP + H2O = ADP + phosphate + H(+)</text>
        <dbReference type="Rhea" id="RHEA:13065"/>
        <dbReference type="ChEBI" id="CHEBI:15377"/>
        <dbReference type="ChEBI" id="CHEBI:15378"/>
        <dbReference type="ChEBI" id="CHEBI:30616"/>
        <dbReference type="ChEBI" id="CHEBI:43474"/>
        <dbReference type="ChEBI" id="CHEBI:456216"/>
    </reaction>
</comment>
<comment type="subunit">
    <text evidence="1">Homohexamer. Forms an RuvA(8)-RuvB(12)-Holliday junction (HJ) complex. HJ DNA is sandwiched between 2 RuvA tetramers; dsDNA enters through RuvA and exits via RuvB. An RuvB hexamer assembles on each DNA strand where it exits the tetramer. Each RuvB hexamer is contacted by two RuvA subunits (via domain III) on 2 adjacent RuvB subunits; this complex drives branch migration. In the full resolvosome a probable DNA-RuvA(4)-RuvB(12)-RuvC(2) complex forms which resolves the HJ.</text>
</comment>
<comment type="subcellular location">
    <subcellularLocation>
        <location evidence="1">Cytoplasm</location>
    </subcellularLocation>
</comment>
<comment type="domain">
    <text evidence="1">Has 3 domains, the large (RuvB-L) and small ATPase (RuvB-S) domains and the C-terminal head (RuvB-H) domain. The head domain binds DNA, while the ATPase domains jointly bind ATP, ADP or are empty depending on the state of the subunit in the translocation cycle. During a single DNA translocation step the structure of each domain remains the same, but their relative positions change.</text>
</comment>
<comment type="similarity">
    <text evidence="1">Belongs to the RuvB family.</text>
</comment>
<reference key="1">
    <citation type="submission" date="2006-12" db="EMBL/GenBank/DDBJ databases">
        <authorList>
            <person name="Fouts D.E."/>
            <person name="Nelson K.E."/>
            <person name="Sebastian Y."/>
        </authorList>
    </citation>
    <scope>NUCLEOTIDE SEQUENCE [LARGE SCALE GENOMIC DNA]</scope>
    <source>
        <strain>81-176</strain>
    </source>
</reference>
<organism>
    <name type="scientific">Campylobacter jejuni subsp. jejuni serotype O:23/36 (strain 81-176)</name>
    <dbReference type="NCBI Taxonomy" id="354242"/>
    <lineage>
        <taxon>Bacteria</taxon>
        <taxon>Pseudomonadati</taxon>
        <taxon>Campylobacterota</taxon>
        <taxon>Epsilonproteobacteria</taxon>
        <taxon>Campylobacterales</taxon>
        <taxon>Campylobacteraceae</taxon>
        <taxon>Campylobacter</taxon>
    </lineage>
</organism>
<name>RUVB_CAMJJ</name>